<comment type="function">
    <text evidence="1 4">May play a role in the ERK signaling pathway by inhibiting the dephosphorylation of ERK by phosphatase PP2A-PPP2R5C holoenzyme. Also acts as an ERK downstream effector mediating survival (By similarity). As a member of the NUPR1/RELB/IER3 survival pathway, may allow the development of pancreatic intraepithelial neoplasias.</text>
</comment>
<comment type="subunit">
    <text evidence="1">Interacts with the PPP2R5C-PP2A holoenzyme and ERK kinases; regulates ERK dephosphorylation.</text>
</comment>
<comment type="subcellular location">
    <subcellularLocation>
        <location evidence="1">Membrane</location>
        <topology evidence="1">Single-pass type II membrane protein</topology>
    </subcellularLocation>
</comment>
<comment type="tissue specificity">
    <text>Expressed predominantly in the lung, testes and the uterus.</text>
</comment>
<comment type="induction">
    <text>By serum growth factors and TPA.</text>
</comment>
<comment type="PTM">
    <text>Glycosylated.</text>
</comment>
<comment type="similarity">
    <text evidence="5">Belongs to the IER3 family.</text>
</comment>
<gene>
    <name type="primary">Ier3</name>
    <name type="synonym">Gly96</name>
    <name type="synonym">Iex1</name>
</gene>
<proteinExistence type="evidence at protein level"/>
<feature type="chain" id="PRO_0000084160" description="Radiation-inducible immediate-early gene IEX-1">
    <location>
        <begin position="1"/>
        <end position="160"/>
    </location>
</feature>
<feature type="topological domain" description="Cytoplasmic" evidence="2">
    <location>
        <begin position="1"/>
        <end position="85"/>
    </location>
</feature>
<feature type="transmembrane region" description="Helical; Signal-anchor for type II membrane protein" evidence="2">
    <location>
        <begin position="86"/>
        <end position="102"/>
    </location>
</feature>
<feature type="topological domain" description="Extracellular" evidence="2">
    <location>
        <begin position="103"/>
        <end position="153"/>
    </location>
</feature>
<feature type="region of interest" description="Disordered" evidence="3">
    <location>
        <begin position="1"/>
        <end position="35"/>
    </location>
</feature>
<feature type="modified residue" description="Phosphoserine" evidence="6">
    <location>
        <position position="31"/>
    </location>
</feature>
<feature type="glycosylation site" description="N-linked (GlcNAc...) asparagine" evidence="2">
    <location>
        <position position="137"/>
    </location>
</feature>
<feature type="sequence conflict" description="In Ref. 4; CAJ18479." evidence="5" ref="4">
    <original>E</original>
    <variation>G</variation>
    <location>
        <position position="134"/>
    </location>
</feature>
<dbReference type="EMBL" id="X67644">
    <property type="status" value="NOT_ANNOTATED_CDS"/>
    <property type="molecule type" value="mRNA"/>
</dbReference>
<dbReference type="EMBL" id="AY168443">
    <property type="protein sequence ID" value="AAO39405.1"/>
    <property type="molecule type" value="Genomic_DNA"/>
</dbReference>
<dbReference type="EMBL" id="AK051003">
    <property type="protein sequence ID" value="BAC34493.1"/>
    <property type="molecule type" value="mRNA"/>
</dbReference>
<dbReference type="EMBL" id="AK170477">
    <property type="protein sequence ID" value="BAE41821.1"/>
    <property type="molecule type" value="mRNA"/>
</dbReference>
<dbReference type="EMBL" id="CT010247">
    <property type="protein sequence ID" value="CAJ18455.1"/>
    <property type="molecule type" value="mRNA"/>
</dbReference>
<dbReference type="EMBL" id="CT010271">
    <property type="protein sequence ID" value="CAJ18479.1"/>
    <property type="molecule type" value="mRNA"/>
</dbReference>
<dbReference type="EMBL" id="GL456179">
    <property type="status" value="NOT_ANNOTATED_CDS"/>
    <property type="molecule type" value="Genomic_DNA"/>
</dbReference>
<dbReference type="EMBL" id="BC006950">
    <property type="protein sequence ID" value="AAH06950.1"/>
    <property type="molecule type" value="mRNA"/>
</dbReference>
<dbReference type="CCDS" id="CCDS28704.1"/>
<dbReference type="PIR" id="S33363">
    <property type="entry name" value="S33363"/>
</dbReference>
<dbReference type="RefSeq" id="NP_598423.1">
    <property type="nucleotide sequence ID" value="NM_133662.2"/>
</dbReference>
<dbReference type="FunCoup" id="P46694">
    <property type="interactions" value="668"/>
</dbReference>
<dbReference type="STRING" id="10090.ENSMUSP00000003635"/>
<dbReference type="GlyCosmos" id="P46694">
    <property type="glycosylation" value="1 site, No reported glycans"/>
</dbReference>
<dbReference type="GlyGen" id="P46694">
    <property type="glycosylation" value="1 site"/>
</dbReference>
<dbReference type="iPTMnet" id="P46694"/>
<dbReference type="PhosphoSitePlus" id="P46694"/>
<dbReference type="jPOST" id="P46694"/>
<dbReference type="PaxDb" id="10090-ENSMUSP00000003635"/>
<dbReference type="PeptideAtlas" id="P46694"/>
<dbReference type="ProteomicsDB" id="273267"/>
<dbReference type="ProteomicsDB" id="308489"/>
<dbReference type="Antibodypedia" id="26624">
    <property type="antibodies" value="170 antibodies from 27 providers"/>
</dbReference>
<dbReference type="DNASU" id="15937"/>
<dbReference type="Ensembl" id="ENSMUST00000003635.7">
    <property type="protein sequence ID" value="ENSMUSP00000003635.7"/>
    <property type="gene ID" value="ENSMUSG00000003541.7"/>
</dbReference>
<dbReference type="GeneID" id="15937"/>
<dbReference type="KEGG" id="mmu:15937"/>
<dbReference type="UCSC" id="uc008cio.1">
    <property type="organism name" value="mouse"/>
</dbReference>
<dbReference type="AGR" id="MGI:104814"/>
<dbReference type="CTD" id="8870"/>
<dbReference type="MGI" id="MGI:104814">
    <property type="gene designation" value="Ier3"/>
</dbReference>
<dbReference type="VEuPathDB" id="HostDB:ENSMUSG00000003541"/>
<dbReference type="eggNOG" id="ENOG502S3QE">
    <property type="taxonomic scope" value="Eukaryota"/>
</dbReference>
<dbReference type="GeneTree" id="ENSGT00390000003213"/>
<dbReference type="HOGENOM" id="CLU_138897_0_0_1"/>
<dbReference type="InParanoid" id="P46694"/>
<dbReference type="OMA" id="GPQYFTF"/>
<dbReference type="OrthoDB" id="9949267at2759"/>
<dbReference type="PhylomeDB" id="P46694"/>
<dbReference type="TreeFam" id="TF338252"/>
<dbReference type="Reactome" id="R-MMU-6811558">
    <property type="pathway name" value="PI5P, PP2A and IER3 Regulate PI3K/AKT Signaling"/>
</dbReference>
<dbReference type="BioGRID-ORCS" id="15937">
    <property type="hits" value="2 hits in 115 CRISPR screens"/>
</dbReference>
<dbReference type="ChiTaRS" id="Ier3">
    <property type="organism name" value="mouse"/>
</dbReference>
<dbReference type="PRO" id="PR:P46694"/>
<dbReference type="Proteomes" id="UP000000589">
    <property type="component" value="Chromosome 17"/>
</dbReference>
<dbReference type="RNAct" id="P46694">
    <property type="molecule type" value="protein"/>
</dbReference>
<dbReference type="Bgee" id="ENSMUSG00000003541">
    <property type="expression patterns" value="Expressed in right lung lobe and 246 other cell types or tissues"/>
</dbReference>
<dbReference type="GO" id="GO:0016020">
    <property type="term" value="C:membrane"/>
    <property type="evidence" value="ECO:0007669"/>
    <property type="project" value="UniProtKB-SubCell"/>
</dbReference>
<dbReference type="GO" id="GO:0005739">
    <property type="term" value="C:mitochondrion"/>
    <property type="evidence" value="ECO:0007669"/>
    <property type="project" value="GOC"/>
</dbReference>
<dbReference type="GO" id="GO:0005634">
    <property type="term" value="C:nucleus"/>
    <property type="evidence" value="ECO:0000314"/>
    <property type="project" value="MGI"/>
</dbReference>
<dbReference type="GO" id="GO:0006974">
    <property type="term" value="P:DNA damage response"/>
    <property type="evidence" value="ECO:0000315"/>
    <property type="project" value="MGI"/>
</dbReference>
<dbReference type="GO" id="GO:0006096">
    <property type="term" value="P:glycolytic process"/>
    <property type="evidence" value="ECO:0000315"/>
    <property type="project" value="MGI"/>
</dbReference>
<dbReference type="GO" id="GO:0008630">
    <property type="term" value="P:intrinsic apoptotic signaling pathway in response to DNA damage"/>
    <property type="evidence" value="ECO:0000314"/>
    <property type="project" value="MGI"/>
</dbReference>
<dbReference type="GO" id="GO:0007095">
    <property type="term" value="P:mitotic G2 DNA damage checkpoint signaling"/>
    <property type="evidence" value="ECO:0000315"/>
    <property type="project" value="MGI"/>
</dbReference>
<dbReference type="GO" id="GO:0045820">
    <property type="term" value="P:negative regulation of glycolytic process"/>
    <property type="evidence" value="ECO:0000315"/>
    <property type="project" value="MGI"/>
</dbReference>
<dbReference type="GO" id="GO:0050728">
    <property type="term" value="P:negative regulation of inflammatory response"/>
    <property type="evidence" value="ECO:0000315"/>
    <property type="project" value="MGI"/>
</dbReference>
<dbReference type="GO" id="GO:1901029">
    <property type="term" value="P:negative regulation of mitochondrial outer membrane permeabilization involved in apoptotic signaling pathway"/>
    <property type="evidence" value="ECO:0000314"/>
    <property type="project" value="MGI"/>
</dbReference>
<dbReference type="GO" id="GO:0003085">
    <property type="term" value="P:negative regulation of systemic arterial blood pressure"/>
    <property type="evidence" value="ECO:0000315"/>
    <property type="project" value="MGI"/>
</dbReference>
<dbReference type="GO" id="GO:0045732">
    <property type="term" value="P:positive regulation of protein catabolic process"/>
    <property type="evidence" value="ECO:0000314"/>
    <property type="project" value="MGI"/>
</dbReference>
<dbReference type="GO" id="GO:0006282">
    <property type="term" value="P:regulation of DNA repair"/>
    <property type="evidence" value="ECO:0000315"/>
    <property type="project" value="MGI"/>
</dbReference>
<dbReference type="GO" id="GO:0046822">
    <property type="term" value="P:regulation of nucleocytoplasmic transport"/>
    <property type="evidence" value="ECO:0000315"/>
    <property type="project" value="MGI"/>
</dbReference>
<dbReference type="GO" id="GO:2000377">
    <property type="term" value="P:regulation of reactive oxygen species metabolic process"/>
    <property type="evidence" value="ECO:0000314"/>
    <property type="project" value="MGI"/>
</dbReference>
<dbReference type="GO" id="GO:0001562">
    <property type="term" value="P:response to protozoan"/>
    <property type="evidence" value="ECO:0000315"/>
    <property type="project" value="MGI"/>
</dbReference>
<dbReference type="InterPro" id="IPR024829">
    <property type="entry name" value="IEX-1"/>
</dbReference>
<dbReference type="PANTHER" id="PTHR16915">
    <property type="entry name" value="IMMEDIATE EARLY RESPONSE 3"/>
    <property type="match status" value="1"/>
</dbReference>
<dbReference type="PANTHER" id="PTHR16915:SF0">
    <property type="entry name" value="RADIATION-INDUCIBLE IMMEDIATE-EARLY GENE IEX-1"/>
    <property type="match status" value="1"/>
</dbReference>
<dbReference type="PRINTS" id="PR02100">
    <property type="entry name" value="GENEIEX1"/>
</dbReference>
<name>IEX1_MOUSE</name>
<keyword id="KW-0325">Glycoprotein</keyword>
<keyword id="KW-0472">Membrane</keyword>
<keyword id="KW-0597">Phosphoprotein</keyword>
<keyword id="KW-1185">Reference proteome</keyword>
<keyword id="KW-0735">Signal-anchor</keyword>
<keyword id="KW-0812">Transmembrane</keyword>
<keyword id="KW-1133">Transmembrane helix</keyword>
<accession>P46694</accession>
<accession>Q4FJY1</accession>
<accession>Q91VZ5</accession>
<organism>
    <name type="scientific">Mus musculus</name>
    <name type="common">Mouse</name>
    <dbReference type="NCBI Taxonomy" id="10090"/>
    <lineage>
        <taxon>Eukaryota</taxon>
        <taxon>Metazoa</taxon>
        <taxon>Chordata</taxon>
        <taxon>Craniata</taxon>
        <taxon>Vertebrata</taxon>
        <taxon>Euteleostomi</taxon>
        <taxon>Mammalia</taxon>
        <taxon>Eutheria</taxon>
        <taxon>Euarchontoglires</taxon>
        <taxon>Glires</taxon>
        <taxon>Rodentia</taxon>
        <taxon>Myomorpha</taxon>
        <taxon>Muroidea</taxon>
        <taxon>Muridae</taxon>
        <taxon>Murinae</taxon>
        <taxon>Mus</taxon>
        <taxon>Mus</taxon>
    </lineage>
</organism>
<reference key="1">
    <citation type="journal article" date="1993" name="Oncogene">
        <title>Genomic structure, cDNA sequence, and expression of gly96, a growth factor-inducible immediate-early gene encoding a short-lived glycosylated protein.</title>
        <authorList>
            <person name="Charles C.H."/>
            <person name="Yoon J.K."/>
            <person name="Simske J.S."/>
            <person name="Lau L.F."/>
        </authorList>
    </citation>
    <scope>NUCLEOTIDE SEQUENCE [MRNA]</scope>
    <source>
        <strain>BALB/cJ</strain>
    </source>
</reference>
<reference key="2">
    <citation type="journal article" date="2003" name="FEBS Lett.">
        <title>Regulation of flotillin-1 in the establishment of NIH-3T3 cell-cell interactions.</title>
        <authorList>
            <person name="Lopez-Casas P.P."/>
            <person name="del Mazo J."/>
        </authorList>
    </citation>
    <scope>NUCLEOTIDE SEQUENCE [GENOMIC DNA]</scope>
    <source>
        <strain>129/SvJ</strain>
    </source>
</reference>
<reference key="3">
    <citation type="journal article" date="2005" name="Science">
        <title>The transcriptional landscape of the mammalian genome.</title>
        <authorList>
            <person name="Carninci P."/>
            <person name="Kasukawa T."/>
            <person name="Katayama S."/>
            <person name="Gough J."/>
            <person name="Frith M.C."/>
            <person name="Maeda N."/>
            <person name="Oyama R."/>
            <person name="Ravasi T."/>
            <person name="Lenhard B."/>
            <person name="Wells C."/>
            <person name="Kodzius R."/>
            <person name="Shimokawa K."/>
            <person name="Bajic V.B."/>
            <person name="Brenner S.E."/>
            <person name="Batalov S."/>
            <person name="Forrest A.R."/>
            <person name="Zavolan M."/>
            <person name="Davis M.J."/>
            <person name="Wilming L.G."/>
            <person name="Aidinis V."/>
            <person name="Allen J.E."/>
            <person name="Ambesi-Impiombato A."/>
            <person name="Apweiler R."/>
            <person name="Aturaliya R.N."/>
            <person name="Bailey T.L."/>
            <person name="Bansal M."/>
            <person name="Baxter L."/>
            <person name="Beisel K.W."/>
            <person name="Bersano T."/>
            <person name="Bono H."/>
            <person name="Chalk A.M."/>
            <person name="Chiu K.P."/>
            <person name="Choudhary V."/>
            <person name="Christoffels A."/>
            <person name="Clutterbuck D.R."/>
            <person name="Crowe M.L."/>
            <person name="Dalla E."/>
            <person name="Dalrymple B.P."/>
            <person name="de Bono B."/>
            <person name="Della Gatta G."/>
            <person name="di Bernardo D."/>
            <person name="Down T."/>
            <person name="Engstrom P."/>
            <person name="Fagiolini M."/>
            <person name="Faulkner G."/>
            <person name="Fletcher C.F."/>
            <person name="Fukushima T."/>
            <person name="Furuno M."/>
            <person name="Futaki S."/>
            <person name="Gariboldi M."/>
            <person name="Georgii-Hemming P."/>
            <person name="Gingeras T.R."/>
            <person name="Gojobori T."/>
            <person name="Green R.E."/>
            <person name="Gustincich S."/>
            <person name="Harbers M."/>
            <person name="Hayashi Y."/>
            <person name="Hensch T.K."/>
            <person name="Hirokawa N."/>
            <person name="Hill D."/>
            <person name="Huminiecki L."/>
            <person name="Iacono M."/>
            <person name="Ikeo K."/>
            <person name="Iwama A."/>
            <person name="Ishikawa T."/>
            <person name="Jakt M."/>
            <person name="Kanapin A."/>
            <person name="Katoh M."/>
            <person name="Kawasawa Y."/>
            <person name="Kelso J."/>
            <person name="Kitamura H."/>
            <person name="Kitano H."/>
            <person name="Kollias G."/>
            <person name="Krishnan S.P."/>
            <person name="Kruger A."/>
            <person name="Kummerfeld S.K."/>
            <person name="Kurochkin I.V."/>
            <person name="Lareau L.F."/>
            <person name="Lazarevic D."/>
            <person name="Lipovich L."/>
            <person name="Liu J."/>
            <person name="Liuni S."/>
            <person name="McWilliam S."/>
            <person name="Madan Babu M."/>
            <person name="Madera M."/>
            <person name="Marchionni L."/>
            <person name="Matsuda H."/>
            <person name="Matsuzawa S."/>
            <person name="Miki H."/>
            <person name="Mignone F."/>
            <person name="Miyake S."/>
            <person name="Morris K."/>
            <person name="Mottagui-Tabar S."/>
            <person name="Mulder N."/>
            <person name="Nakano N."/>
            <person name="Nakauchi H."/>
            <person name="Ng P."/>
            <person name="Nilsson R."/>
            <person name="Nishiguchi S."/>
            <person name="Nishikawa S."/>
            <person name="Nori F."/>
            <person name="Ohara O."/>
            <person name="Okazaki Y."/>
            <person name="Orlando V."/>
            <person name="Pang K.C."/>
            <person name="Pavan W.J."/>
            <person name="Pavesi G."/>
            <person name="Pesole G."/>
            <person name="Petrovsky N."/>
            <person name="Piazza S."/>
            <person name="Reed J."/>
            <person name="Reid J.F."/>
            <person name="Ring B.Z."/>
            <person name="Ringwald M."/>
            <person name="Rost B."/>
            <person name="Ruan Y."/>
            <person name="Salzberg S.L."/>
            <person name="Sandelin A."/>
            <person name="Schneider C."/>
            <person name="Schoenbach C."/>
            <person name="Sekiguchi K."/>
            <person name="Semple C.A."/>
            <person name="Seno S."/>
            <person name="Sessa L."/>
            <person name="Sheng Y."/>
            <person name="Shibata Y."/>
            <person name="Shimada H."/>
            <person name="Shimada K."/>
            <person name="Silva D."/>
            <person name="Sinclair B."/>
            <person name="Sperling S."/>
            <person name="Stupka E."/>
            <person name="Sugiura K."/>
            <person name="Sultana R."/>
            <person name="Takenaka Y."/>
            <person name="Taki K."/>
            <person name="Tammoja K."/>
            <person name="Tan S.L."/>
            <person name="Tang S."/>
            <person name="Taylor M.S."/>
            <person name="Tegner J."/>
            <person name="Teichmann S.A."/>
            <person name="Ueda H.R."/>
            <person name="van Nimwegen E."/>
            <person name="Verardo R."/>
            <person name="Wei C.L."/>
            <person name="Yagi K."/>
            <person name="Yamanishi H."/>
            <person name="Zabarovsky E."/>
            <person name="Zhu S."/>
            <person name="Zimmer A."/>
            <person name="Hide W."/>
            <person name="Bult C."/>
            <person name="Grimmond S.M."/>
            <person name="Teasdale R.D."/>
            <person name="Liu E.T."/>
            <person name="Brusic V."/>
            <person name="Quackenbush J."/>
            <person name="Wahlestedt C."/>
            <person name="Mattick J.S."/>
            <person name="Hume D.A."/>
            <person name="Kai C."/>
            <person name="Sasaki D."/>
            <person name="Tomaru Y."/>
            <person name="Fukuda S."/>
            <person name="Kanamori-Katayama M."/>
            <person name="Suzuki M."/>
            <person name="Aoki J."/>
            <person name="Arakawa T."/>
            <person name="Iida J."/>
            <person name="Imamura K."/>
            <person name="Itoh M."/>
            <person name="Kato T."/>
            <person name="Kawaji H."/>
            <person name="Kawagashira N."/>
            <person name="Kawashima T."/>
            <person name="Kojima M."/>
            <person name="Kondo S."/>
            <person name="Konno H."/>
            <person name="Nakano K."/>
            <person name="Ninomiya N."/>
            <person name="Nishio T."/>
            <person name="Okada M."/>
            <person name="Plessy C."/>
            <person name="Shibata K."/>
            <person name="Shiraki T."/>
            <person name="Suzuki S."/>
            <person name="Tagami M."/>
            <person name="Waki K."/>
            <person name="Watahiki A."/>
            <person name="Okamura-Oho Y."/>
            <person name="Suzuki H."/>
            <person name="Kawai J."/>
            <person name="Hayashizaki Y."/>
        </authorList>
    </citation>
    <scope>NUCLEOTIDE SEQUENCE [LARGE SCALE MRNA]</scope>
    <source>
        <strain>C57BL/6J</strain>
        <strain>NOD</strain>
    </source>
</reference>
<reference key="4">
    <citation type="submission" date="2005-07" db="EMBL/GenBank/DDBJ databases">
        <title>Cloning of mouse full open reading frames in Gateway(R) system entry vector (pDONR201).</title>
        <authorList>
            <person name="Ebert L."/>
            <person name="Muenstermann E."/>
            <person name="Schatten R."/>
            <person name="Henze S."/>
            <person name="Bohn E."/>
            <person name="Mollenhauer J."/>
            <person name="Wiemann S."/>
            <person name="Schick M."/>
            <person name="Korn B."/>
        </authorList>
    </citation>
    <scope>NUCLEOTIDE SEQUENCE [LARGE SCALE MRNA]</scope>
</reference>
<reference key="5">
    <citation type="journal article" date="2009" name="PLoS Biol.">
        <title>Lineage-specific biology revealed by a finished genome assembly of the mouse.</title>
        <authorList>
            <person name="Church D.M."/>
            <person name="Goodstadt L."/>
            <person name="Hillier L.W."/>
            <person name="Zody M.C."/>
            <person name="Goldstein S."/>
            <person name="She X."/>
            <person name="Bult C.J."/>
            <person name="Agarwala R."/>
            <person name="Cherry J.L."/>
            <person name="DiCuccio M."/>
            <person name="Hlavina W."/>
            <person name="Kapustin Y."/>
            <person name="Meric P."/>
            <person name="Maglott D."/>
            <person name="Birtle Z."/>
            <person name="Marques A.C."/>
            <person name="Graves T."/>
            <person name="Zhou S."/>
            <person name="Teague B."/>
            <person name="Potamousis K."/>
            <person name="Churas C."/>
            <person name="Place M."/>
            <person name="Herschleb J."/>
            <person name="Runnheim R."/>
            <person name="Forrest D."/>
            <person name="Amos-Landgraf J."/>
            <person name="Schwartz D.C."/>
            <person name="Cheng Z."/>
            <person name="Lindblad-Toh K."/>
            <person name="Eichler E.E."/>
            <person name="Ponting C.P."/>
        </authorList>
    </citation>
    <scope>NUCLEOTIDE SEQUENCE [LARGE SCALE GENOMIC DNA]</scope>
    <source>
        <strain>C57BL/6J</strain>
    </source>
</reference>
<reference key="6">
    <citation type="journal article" date="2004" name="Genome Res.">
        <title>The status, quality, and expansion of the NIH full-length cDNA project: the Mammalian Gene Collection (MGC).</title>
        <authorList>
            <consortium name="The MGC Project Team"/>
        </authorList>
    </citation>
    <scope>NUCLEOTIDE SEQUENCE [LARGE SCALE MRNA]</scope>
    <source>
        <strain>FVB/N</strain>
        <tissue>Mammary tumor</tissue>
    </source>
</reference>
<reference key="7">
    <citation type="journal article" date="2010" name="Cell">
        <title>A tissue-specific atlas of mouse protein phosphorylation and expression.</title>
        <authorList>
            <person name="Huttlin E.L."/>
            <person name="Jedrychowski M.P."/>
            <person name="Elias J.E."/>
            <person name="Goswami T."/>
            <person name="Rad R."/>
            <person name="Beausoleil S.A."/>
            <person name="Villen J."/>
            <person name="Haas W."/>
            <person name="Sowa M.E."/>
            <person name="Gygi S.P."/>
        </authorList>
    </citation>
    <scope>PHOSPHORYLATION [LARGE SCALE ANALYSIS] AT SER-31</scope>
    <scope>IDENTIFICATION BY MASS SPECTROMETRY [LARGE SCALE ANALYSIS]</scope>
    <source>
        <tissue>Brown adipose tissue</tissue>
        <tissue>Heart</tissue>
        <tissue>Kidney</tissue>
    </source>
</reference>
<reference key="8">
    <citation type="journal article" date="2012" name="J. Clin. Invest.">
        <title>Nuclear protein 1 promotes pancreatic cancer development and protects cells from stress by inhibiting apoptosis.</title>
        <authorList>
            <person name="Hamidi T."/>
            <person name="Algul H."/>
            <person name="Cano C.E."/>
            <person name="Sandi M.J."/>
            <person name="Molejon M.I."/>
            <person name="Riemann M."/>
            <person name="Calvo E.L."/>
            <person name="Lomberk G."/>
            <person name="Dagorn J.C."/>
            <person name="Weih F."/>
            <person name="Urrutia R."/>
            <person name="Schmid R.M."/>
            <person name="Iovanna J.L."/>
        </authorList>
    </citation>
    <scope>FUNCTION</scope>
</reference>
<sequence length="160" mass="17655">MCHSRNHLHTMTGLRAPSPAPSTGPELRRGSGPEIFTFDPLPERAVVSTARLNTSRGHRKRSRRVLYPRVVRRQLPTEEPNIAKRVLFLLFAIIFCQILMAEEGVSQPLAPEDATSAVTPEPISAPITAPPVLEPLNLTSESSDYALDLKAFLQQHPAAF</sequence>
<evidence type="ECO:0000250" key="1"/>
<evidence type="ECO:0000255" key="2"/>
<evidence type="ECO:0000256" key="3">
    <source>
        <dbReference type="SAM" id="MobiDB-lite"/>
    </source>
</evidence>
<evidence type="ECO:0000269" key="4">
    <source>
    </source>
</evidence>
<evidence type="ECO:0000305" key="5"/>
<evidence type="ECO:0007744" key="6">
    <source>
    </source>
</evidence>
<protein>
    <recommendedName>
        <fullName>Radiation-inducible immediate-early gene IEX-1</fullName>
    </recommendedName>
    <alternativeName>
        <fullName>Immediate early protein GLY96</fullName>
    </alternativeName>
    <alternativeName>
        <fullName>Immediate early response 3 protein</fullName>
    </alternativeName>
</protein>